<comment type="function">
    <text evidence="1">Exhibits S-adenosyl-L-methionine-dependent methyltransferase activity.</text>
</comment>
<comment type="similarity">
    <text evidence="2">Belongs to the UPF0677 family.</text>
</comment>
<accession>A1KGL2</accession>
<feature type="chain" id="PRO_0000361151" description="Putative S-adenosyl-L-methionine-dependent methyltransferase BCG_0781c">
    <location>
        <begin position="1"/>
        <end position="318"/>
    </location>
</feature>
<feature type="binding site" evidence="1">
    <location>
        <position position="135"/>
    </location>
    <ligand>
        <name>S-adenosyl-L-methionine</name>
        <dbReference type="ChEBI" id="CHEBI:59789"/>
    </ligand>
</feature>
<feature type="binding site" evidence="1">
    <location>
        <begin position="164"/>
        <end position="165"/>
    </location>
    <ligand>
        <name>S-adenosyl-L-methionine</name>
        <dbReference type="ChEBI" id="CHEBI:59789"/>
    </ligand>
</feature>
<sequence>MTQTGSARFEGDSWDLASSVGLTATMVAAARAVAGRAPGALVNDQFAEPLVRAVGVDFFVRMASGELDPDELAEDEANGLRRFADAMAIRTHYFDNFFLDATRAGIRQAVILASGLDSRAYRLRWPAGTIVFEVDQPQVIDFKTTTLAGLGAAPTTDRRTVAVDLRDDWPTALQKAGFDNAQRTAWIAEGLLGYLSAEAQDRLLDQITAQSVPGSQFATEVLRDINRLNEEELRGRMRRLAERFRRHGLDLDMSGLVYFGDRTDARTYLADHGWRTASASTTDLLAEHGLPPIDGDDAPFGEVIYVSAELKQKHQDTR</sequence>
<organism>
    <name type="scientific">Mycobacterium bovis (strain BCG / Pasteur 1173P2)</name>
    <dbReference type="NCBI Taxonomy" id="410289"/>
    <lineage>
        <taxon>Bacteria</taxon>
        <taxon>Bacillati</taxon>
        <taxon>Actinomycetota</taxon>
        <taxon>Actinomycetes</taxon>
        <taxon>Mycobacteriales</taxon>
        <taxon>Mycobacteriaceae</taxon>
        <taxon>Mycobacterium</taxon>
        <taxon>Mycobacterium tuberculosis complex</taxon>
    </lineage>
</organism>
<dbReference type="EC" id="2.1.1.-"/>
<dbReference type="EMBL" id="AM408590">
    <property type="protein sequence ID" value="CAL70767.1"/>
    <property type="molecule type" value="Genomic_DNA"/>
</dbReference>
<dbReference type="RefSeq" id="WP_003403717.1">
    <property type="nucleotide sequence ID" value="NC_008769.1"/>
</dbReference>
<dbReference type="SMR" id="A1KGL2"/>
<dbReference type="KEGG" id="mbb:BCG_0781c"/>
<dbReference type="HOGENOM" id="CLU_056160_2_1_11"/>
<dbReference type="Proteomes" id="UP000001472">
    <property type="component" value="Chromosome"/>
</dbReference>
<dbReference type="GO" id="GO:0008168">
    <property type="term" value="F:methyltransferase activity"/>
    <property type="evidence" value="ECO:0007669"/>
    <property type="project" value="UniProtKB-KW"/>
</dbReference>
<dbReference type="GO" id="GO:0032259">
    <property type="term" value="P:methylation"/>
    <property type="evidence" value="ECO:0007669"/>
    <property type="project" value="UniProtKB-KW"/>
</dbReference>
<dbReference type="Gene3D" id="3.40.50.150">
    <property type="entry name" value="Vaccinia Virus protein VP39"/>
    <property type="match status" value="1"/>
</dbReference>
<dbReference type="InterPro" id="IPR007213">
    <property type="entry name" value="Ppm1/Ppm2/Tcmp"/>
</dbReference>
<dbReference type="InterPro" id="IPR029063">
    <property type="entry name" value="SAM-dependent_MTases_sf"/>
</dbReference>
<dbReference type="InterPro" id="IPR011610">
    <property type="entry name" value="SAM_mthyl_Trfase_ML2640-like"/>
</dbReference>
<dbReference type="NCBIfam" id="TIGR00027">
    <property type="entry name" value="mthyl_TIGR00027"/>
    <property type="match status" value="1"/>
</dbReference>
<dbReference type="PANTHER" id="PTHR43619">
    <property type="entry name" value="S-ADENOSYL-L-METHIONINE-DEPENDENT METHYLTRANSFERASE YKTD-RELATED"/>
    <property type="match status" value="1"/>
</dbReference>
<dbReference type="PANTHER" id="PTHR43619:SF2">
    <property type="entry name" value="S-ADENOSYL-L-METHIONINE-DEPENDENT METHYLTRANSFERASES SUPERFAMILY PROTEIN"/>
    <property type="match status" value="1"/>
</dbReference>
<dbReference type="Pfam" id="PF04072">
    <property type="entry name" value="LCM"/>
    <property type="match status" value="1"/>
</dbReference>
<dbReference type="SUPFAM" id="SSF53335">
    <property type="entry name" value="S-adenosyl-L-methionine-dependent methyltransferases"/>
    <property type="match status" value="1"/>
</dbReference>
<gene>
    <name type="ordered locus">BCG_0781c</name>
</gene>
<name>Y781_MYCBP</name>
<proteinExistence type="inferred from homology"/>
<protein>
    <recommendedName>
        <fullName>Putative S-adenosyl-L-methionine-dependent methyltransferase BCG_0781c</fullName>
        <ecNumber>2.1.1.-</ecNumber>
    </recommendedName>
</protein>
<reference key="1">
    <citation type="journal article" date="2007" name="Proc. Natl. Acad. Sci. U.S.A.">
        <title>Genome plasticity of BCG and impact on vaccine efficacy.</title>
        <authorList>
            <person name="Brosch R."/>
            <person name="Gordon S.V."/>
            <person name="Garnier T."/>
            <person name="Eiglmeier K."/>
            <person name="Frigui W."/>
            <person name="Valenti P."/>
            <person name="Dos Santos S."/>
            <person name="Duthoy S."/>
            <person name="Lacroix C."/>
            <person name="Garcia-Pelayo C."/>
            <person name="Inwald J.K."/>
            <person name="Golby P."/>
            <person name="Garcia J.N."/>
            <person name="Hewinson R.G."/>
            <person name="Behr M.A."/>
            <person name="Quail M.A."/>
            <person name="Churcher C."/>
            <person name="Barrell B.G."/>
            <person name="Parkhill J."/>
            <person name="Cole S.T."/>
        </authorList>
    </citation>
    <scope>NUCLEOTIDE SEQUENCE [LARGE SCALE GENOMIC DNA]</scope>
    <source>
        <strain>BCG / Pasteur 1173P2</strain>
    </source>
</reference>
<evidence type="ECO:0000250" key="1"/>
<evidence type="ECO:0000305" key="2"/>
<keyword id="KW-0489">Methyltransferase</keyword>
<keyword id="KW-0949">S-adenosyl-L-methionine</keyword>
<keyword id="KW-0808">Transferase</keyword>